<dbReference type="EMBL" id="AP010904">
    <property type="protein sequence ID" value="BAH74734.1"/>
    <property type="molecule type" value="Genomic_DNA"/>
</dbReference>
<dbReference type="RefSeq" id="WP_015859949.1">
    <property type="nucleotide sequence ID" value="NC_012796.1"/>
</dbReference>
<dbReference type="SMR" id="C4XLK0"/>
<dbReference type="STRING" id="573370.DMR_12430"/>
<dbReference type="KEGG" id="dma:DMR_12430"/>
<dbReference type="eggNOG" id="COG0099">
    <property type="taxonomic scope" value="Bacteria"/>
</dbReference>
<dbReference type="HOGENOM" id="CLU_103849_1_2_7"/>
<dbReference type="OrthoDB" id="9803610at2"/>
<dbReference type="Proteomes" id="UP000009071">
    <property type="component" value="Chromosome"/>
</dbReference>
<dbReference type="GO" id="GO:0005829">
    <property type="term" value="C:cytosol"/>
    <property type="evidence" value="ECO:0007669"/>
    <property type="project" value="TreeGrafter"/>
</dbReference>
<dbReference type="GO" id="GO:0015935">
    <property type="term" value="C:small ribosomal subunit"/>
    <property type="evidence" value="ECO:0007669"/>
    <property type="project" value="TreeGrafter"/>
</dbReference>
<dbReference type="GO" id="GO:0019843">
    <property type="term" value="F:rRNA binding"/>
    <property type="evidence" value="ECO:0007669"/>
    <property type="project" value="UniProtKB-UniRule"/>
</dbReference>
<dbReference type="GO" id="GO:0003735">
    <property type="term" value="F:structural constituent of ribosome"/>
    <property type="evidence" value="ECO:0007669"/>
    <property type="project" value="InterPro"/>
</dbReference>
<dbReference type="GO" id="GO:0000049">
    <property type="term" value="F:tRNA binding"/>
    <property type="evidence" value="ECO:0007669"/>
    <property type="project" value="UniProtKB-UniRule"/>
</dbReference>
<dbReference type="GO" id="GO:0006412">
    <property type="term" value="P:translation"/>
    <property type="evidence" value="ECO:0007669"/>
    <property type="project" value="UniProtKB-UniRule"/>
</dbReference>
<dbReference type="FunFam" id="1.10.8.50:FF:000001">
    <property type="entry name" value="30S ribosomal protein S13"/>
    <property type="match status" value="1"/>
</dbReference>
<dbReference type="FunFam" id="4.10.910.10:FF:000001">
    <property type="entry name" value="30S ribosomal protein S13"/>
    <property type="match status" value="1"/>
</dbReference>
<dbReference type="Gene3D" id="1.10.8.50">
    <property type="match status" value="1"/>
</dbReference>
<dbReference type="Gene3D" id="4.10.910.10">
    <property type="entry name" value="30s ribosomal protein s13, domain 2"/>
    <property type="match status" value="1"/>
</dbReference>
<dbReference type="HAMAP" id="MF_01315">
    <property type="entry name" value="Ribosomal_uS13"/>
    <property type="match status" value="1"/>
</dbReference>
<dbReference type="InterPro" id="IPR027437">
    <property type="entry name" value="Rbsml_uS13_C"/>
</dbReference>
<dbReference type="InterPro" id="IPR001892">
    <property type="entry name" value="Ribosomal_uS13"/>
</dbReference>
<dbReference type="InterPro" id="IPR010979">
    <property type="entry name" value="Ribosomal_uS13-like_H2TH"/>
</dbReference>
<dbReference type="InterPro" id="IPR019980">
    <property type="entry name" value="Ribosomal_uS13_bac-type"/>
</dbReference>
<dbReference type="InterPro" id="IPR018269">
    <property type="entry name" value="Ribosomal_uS13_CS"/>
</dbReference>
<dbReference type="NCBIfam" id="TIGR03631">
    <property type="entry name" value="uS13_bact"/>
    <property type="match status" value="1"/>
</dbReference>
<dbReference type="PANTHER" id="PTHR10871">
    <property type="entry name" value="30S RIBOSOMAL PROTEIN S13/40S RIBOSOMAL PROTEIN S18"/>
    <property type="match status" value="1"/>
</dbReference>
<dbReference type="PANTHER" id="PTHR10871:SF1">
    <property type="entry name" value="SMALL RIBOSOMAL SUBUNIT PROTEIN US13M"/>
    <property type="match status" value="1"/>
</dbReference>
<dbReference type="Pfam" id="PF00416">
    <property type="entry name" value="Ribosomal_S13"/>
    <property type="match status" value="1"/>
</dbReference>
<dbReference type="PIRSF" id="PIRSF002134">
    <property type="entry name" value="Ribosomal_S13"/>
    <property type="match status" value="1"/>
</dbReference>
<dbReference type="SUPFAM" id="SSF46946">
    <property type="entry name" value="S13-like H2TH domain"/>
    <property type="match status" value="1"/>
</dbReference>
<dbReference type="PROSITE" id="PS00646">
    <property type="entry name" value="RIBOSOMAL_S13_1"/>
    <property type="match status" value="1"/>
</dbReference>
<dbReference type="PROSITE" id="PS50159">
    <property type="entry name" value="RIBOSOMAL_S13_2"/>
    <property type="match status" value="1"/>
</dbReference>
<evidence type="ECO:0000255" key="1">
    <source>
        <dbReference type="HAMAP-Rule" id="MF_01315"/>
    </source>
</evidence>
<evidence type="ECO:0000256" key="2">
    <source>
        <dbReference type="SAM" id="MobiDB-lite"/>
    </source>
</evidence>
<evidence type="ECO:0000305" key="3"/>
<comment type="function">
    <text evidence="1">Located at the top of the head of the 30S subunit, it contacts several helices of the 16S rRNA. In the 70S ribosome it contacts the 23S rRNA (bridge B1a) and protein L5 of the 50S subunit (bridge B1b), connecting the 2 subunits; these bridges are implicated in subunit movement. Contacts the tRNAs in the A and P-sites.</text>
</comment>
<comment type="subunit">
    <text evidence="1">Part of the 30S ribosomal subunit. Forms a loose heterodimer with protein S19. Forms two bridges to the 50S subunit in the 70S ribosome.</text>
</comment>
<comment type="similarity">
    <text evidence="1">Belongs to the universal ribosomal protein uS13 family.</text>
</comment>
<sequence>MARIAGVDLPKNKRMDIALTYIFGIGRTTALRILESTGVDWTKNSDALTSEETNNIRKELEANYKVEGDLRREITAGIKRLMDIGCYRGLRHRRGLPCRGQRTHTNSRTRKGPRRGVMAKKKK</sequence>
<name>RS13_SOLM1</name>
<gene>
    <name evidence="1" type="primary">rpsM</name>
    <name type="ordered locus">DMR_12430</name>
</gene>
<organism>
    <name type="scientific">Solidesulfovibrio magneticus (strain ATCC 700980 / DSM 13731 / RS-1)</name>
    <name type="common">Desulfovibrio magneticus</name>
    <dbReference type="NCBI Taxonomy" id="573370"/>
    <lineage>
        <taxon>Bacteria</taxon>
        <taxon>Pseudomonadati</taxon>
        <taxon>Thermodesulfobacteriota</taxon>
        <taxon>Desulfovibrionia</taxon>
        <taxon>Desulfovibrionales</taxon>
        <taxon>Desulfovibrionaceae</taxon>
        <taxon>Solidesulfovibrio</taxon>
    </lineage>
</organism>
<reference key="1">
    <citation type="journal article" date="2009" name="Genome Res.">
        <title>Whole genome sequence of Desulfovibrio magneticus strain RS-1 revealed common gene clusters in magnetotactic bacteria.</title>
        <authorList>
            <person name="Nakazawa H."/>
            <person name="Arakaki A."/>
            <person name="Narita-Yamada S."/>
            <person name="Yashiro I."/>
            <person name="Jinno K."/>
            <person name="Aoki N."/>
            <person name="Tsuruyama A."/>
            <person name="Okamura Y."/>
            <person name="Tanikawa S."/>
            <person name="Fujita N."/>
            <person name="Takeyama H."/>
            <person name="Matsunaga T."/>
        </authorList>
    </citation>
    <scope>NUCLEOTIDE SEQUENCE [LARGE SCALE GENOMIC DNA]</scope>
    <source>
        <strain>ATCC 700980 / DSM 13731 / RS-1</strain>
    </source>
</reference>
<feature type="chain" id="PRO_1000214390" description="Small ribosomal subunit protein uS13">
    <location>
        <begin position="1"/>
        <end position="123"/>
    </location>
</feature>
<feature type="region of interest" description="Disordered" evidence="2">
    <location>
        <begin position="97"/>
        <end position="123"/>
    </location>
</feature>
<accession>C4XLK0</accession>
<keyword id="KW-0687">Ribonucleoprotein</keyword>
<keyword id="KW-0689">Ribosomal protein</keyword>
<keyword id="KW-0694">RNA-binding</keyword>
<keyword id="KW-0699">rRNA-binding</keyword>
<keyword id="KW-0820">tRNA-binding</keyword>
<proteinExistence type="inferred from homology"/>
<protein>
    <recommendedName>
        <fullName evidence="1">Small ribosomal subunit protein uS13</fullName>
    </recommendedName>
    <alternativeName>
        <fullName evidence="3">30S ribosomal protein S13</fullName>
    </alternativeName>
</protein>